<reference key="1">
    <citation type="journal article" date="2009" name="Nature">
        <title>Genome sequence and analysis of the Irish potato famine pathogen Phytophthora infestans.</title>
        <authorList>
            <consortium name="The Broad Institute Genome Sequencing Platform"/>
            <person name="Haas B.J."/>
            <person name="Kamoun S."/>
            <person name="Zody M.C."/>
            <person name="Jiang R.H."/>
            <person name="Handsaker R.E."/>
            <person name="Cano L.M."/>
            <person name="Grabherr M."/>
            <person name="Kodira C.D."/>
            <person name="Raffaele S."/>
            <person name="Torto-Alalibo T."/>
            <person name="Bozkurt T.O."/>
            <person name="Ah-Fong A.M."/>
            <person name="Alvarado L."/>
            <person name="Anderson V.L."/>
            <person name="Armstrong M.R."/>
            <person name="Avrova A."/>
            <person name="Baxter L."/>
            <person name="Beynon J."/>
            <person name="Boevink P.C."/>
            <person name="Bollmann S.R."/>
            <person name="Bos J.I."/>
            <person name="Bulone V."/>
            <person name="Cai G."/>
            <person name="Cakir C."/>
            <person name="Carrington J.C."/>
            <person name="Chawner M."/>
            <person name="Conti L."/>
            <person name="Costanzo S."/>
            <person name="Ewan R."/>
            <person name="Fahlgren N."/>
            <person name="Fischbach M.A."/>
            <person name="Fugelstad J."/>
            <person name="Gilroy E.M."/>
            <person name="Gnerre S."/>
            <person name="Green P.J."/>
            <person name="Grenville-Briggs L.J."/>
            <person name="Griffith J."/>
            <person name="Grunwald N.J."/>
            <person name="Horn K."/>
            <person name="Horner N.R."/>
            <person name="Hu C.H."/>
            <person name="Huitema E."/>
            <person name="Jeong D.H."/>
            <person name="Jones A.M."/>
            <person name="Jones J.D."/>
            <person name="Jones R.W."/>
            <person name="Karlsson E.K."/>
            <person name="Kunjeti S.G."/>
            <person name="Lamour K."/>
            <person name="Liu Z."/>
            <person name="Ma L."/>
            <person name="Maclean D."/>
            <person name="Chibucos M.C."/>
            <person name="McDonald H."/>
            <person name="McWalters J."/>
            <person name="Meijer H.J."/>
            <person name="Morgan W."/>
            <person name="Morris P.F."/>
            <person name="Munro C.A."/>
            <person name="O'Neill K."/>
            <person name="Ospina-Giraldo M."/>
            <person name="Pinzon A."/>
            <person name="Pritchard L."/>
            <person name="Ramsahoye B."/>
            <person name="Ren Q."/>
            <person name="Restrepo S."/>
            <person name="Roy S."/>
            <person name="Sadanandom A."/>
            <person name="Savidor A."/>
            <person name="Schornack S."/>
            <person name="Schwartz D.C."/>
            <person name="Schumann U.D."/>
            <person name="Schwessinger B."/>
            <person name="Seyer L."/>
            <person name="Sharpe T."/>
            <person name="Silvar C."/>
            <person name="Song J."/>
            <person name="Studholme D.J."/>
            <person name="Sykes S."/>
            <person name="Thines M."/>
            <person name="van de Vondervoort P.J."/>
            <person name="Phuntumart V."/>
            <person name="Wawra S."/>
            <person name="Weide R."/>
            <person name="Win J."/>
            <person name="Young C."/>
            <person name="Zhou S."/>
            <person name="Fry W."/>
            <person name="Meyers B.C."/>
            <person name="van West P."/>
            <person name="Ristaino J."/>
            <person name="Govers F."/>
            <person name="Birch P.R."/>
            <person name="Whisson S.C."/>
            <person name="Judelson H.S."/>
            <person name="Nusbaum C."/>
        </authorList>
    </citation>
    <scope>NUCLEOTIDE SEQUENCE [LARGE SCALE GENOMIC DNA]</scope>
    <source>
        <strain>T30-4</strain>
    </source>
</reference>
<reference key="2">
    <citation type="journal article" date="2017" name="Eur. J. Plant Pathol.">
        <title>Phytophthora infestans effector Pi14054 is a novel candidate suppressor of host silencing mechanisms.</title>
        <authorList>
            <person name="Vetukuri R.R."/>
            <person name="Whisson S.C."/>
            <person name="Grenville-Briggs L.J."/>
        </authorList>
    </citation>
    <scope>FUNCTION</scope>
    <scope>INDUCTION</scope>
</reference>
<feature type="signal peptide" evidence="1">
    <location>
        <begin position="1"/>
        <end position="23"/>
    </location>
</feature>
<feature type="chain" id="PRO_5003012675" description="Secreted RxLR effector protein PITG_22926">
    <location>
        <begin position="24"/>
        <end position="229"/>
    </location>
</feature>
<feature type="short sequence motif" description="RxLR-dEER" evidence="5">
    <location>
        <begin position="34"/>
        <end position="45"/>
    </location>
</feature>
<organism>
    <name type="scientific">Phytophthora infestans (strain T30-4)</name>
    <name type="common">Potato late blight agent</name>
    <dbReference type="NCBI Taxonomy" id="403677"/>
    <lineage>
        <taxon>Eukaryota</taxon>
        <taxon>Sar</taxon>
        <taxon>Stramenopiles</taxon>
        <taxon>Oomycota</taxon>
        <taxon>Peronosporales</taxon>
        <taxon>Peronosporaceae</taxon>
        <taxon>Phytophthora</taxon>
    </lineage>
</organism>
<comment type="function">
    <text evidence="2">Secreted effector that acts as a RNA silencing suppressor, probably by inhibiting the biogenesis of small RNAs in the host plant, to manipulate host immune responses and promote Phytophthora infection.</text>
</comment>
<comment type="subcellular location">
    <subcellularLocation>
        <location evidence="6">Secreted</location>
    </subcellularLocation>
    <subcellularLocation>
        <location evidence="6">Host nucleus</location>
    </subcellularLocation>
</comment>
<comment type="induction">
    <text evidence="2">Expression is specifically induced early in the infection process, in contact with host tissue.</text>
</comment>
<comment type="domain">
    <text evidence="5">The RxLR-dEER motif acts to carry the protein into the host cell cytoplasm through binding to cell surface phosphatidylinositol-3-phosphate.</text>
</comment>
<comment type="similarity">
    <text evidence="4">Belongs to the RxLR effector family.</text>
</comment>
<dbReference type="EMBL" id="DS028149">
    <property type="protein sequence ID" value="EEY62159.1"/>
    <property type="molecule type" value="Genomic_DNA"/>
</dbReference>
<dbReference type="RefSeq" id="XP_002899190.1">
    <property type="nucleotide sequence ID" value="XM_002899144.1"/>
</dbReference>
<dbReference type="SMR" id="D0NNI8"/>
<dbReference type="STRING" id="403677.D0NNI8"/>
<dbReference type="EnsemblProtists" id="PITG_14054T0">
    <property type="protein sequence ID" value="PITG_14054T0"/>
    <property type="gene ID" value="PITG_14054"/>
</dbReference>
<dbReference type="GeneID" id="9468277"/>
<dbReference type="KEGG" id="pif:PITG_14054"/>
<dbReference type="VEuPathDB" id="FungiDB:PITG_14054"/>
<dbReference type="eggNOG" id="ENOG502RFQ3">
    <property type="taxonomic scope" value="Eukaryota"/>
</dbReference>
<dbReference type="HOGENOM" id="CLU_071191_1_0_1"/>
<dbReference type="InParanoid" id="D0NNI8"/>
<dbReference type="OMA" id="CVVAITF"/>
<dbReference type="OrthoDB" id="97973at2759"/>
<dbReference type="Proteomes" id="UP000006643">
    <property type="component" value="Partially assembled WGS sequence"/>
</dbReference>
<dbReference type="GO" id="GO:0005576">
    <property type="term" value="C:extracellular region"/>
    <property type="evidence" value="ECO:0007669"/>
    <property type="project" value="UniProtKB-SubCell"/>
</dbReference>
<dbReference type="GO" id="GO:0042025">
    <property type="term" value="C:host cell nucleus"/>
    <property type="evidence" value="ECO:0007669"/>
    <property type="project" value="UniProtKB-SubCell"/>
</dbReference>
<evidence type="ECO:0000255" key="1"/>
<evidence type="ECO:0000269" key="2">
    <source ref="2"/>
</evidence>
<evidence type="ECO:0000303" key="3">
    <source>
    </source>
</evidence>
<evidence type="ECO:0000305" key="4"/>
<evidence type="ECO:0000305" key="5">
    <source>
    </source>
</evidence>
<evidence type="ECO:0000305" key="6">
    <source ref="2"/>
</evidence>
<keyword id="KW-1048">Host nucleus</keyword>
<keyword id="KW-1185">Reference proteome</keyword>
<keyword id="KW-0964">Secreted</keyword>
<keyword id="KW-0732">Signal</keyword>
<keyword id="KW-0843">Virulence</keyword>
<sequence>MRCNHTLCVVAITFLVSWSQTLSTPVESRRTESPLVRSVSATEERNIFSQTAEAVAKWGTTTALLNLGKTDDEVKKILGLEKLSGEALKAHSNYHLLDDFITKLRDRKVTGWLHKDTTTDEVWKTLQLDDLFAKLDAKEFRHSDELKTYVQYVKKLDDDIWNYKRASFEPDSSSPLELAVKIHIWAKAKRPSWHVLEMMGNNALKGSKNRKFYREYLLLIKGKKPIIDF</sequence>
<protein>
    <recommendedName>
        <fullName evidence="3">Secreted RxLR effector protein PITG_22926</fullName>
    </recommendedName>
</protein>
<name>RXLAD_PHYIT</name>
<gene>
    <name type="ORF">PITG_14054</name>
</gene>
<proteinExistence type="evidence at transcript level"/>
<accession>D0NNI8</accession>